<accession>B2ILZ1</accession>
<proteinExistence type="inferred from homology"/>
<gene>
    <name evidence="1" type="primary">recX</name>
    <name type="ordered locus">SPCG_1877</name>
</gene>
<evidence type="ECO:0000255" key="1">
    <source>
        <dbReference type="HAMAP-Rule" id="MF_01114"/>
    </source>
</evidence>
<name>RECX_STRPS</name>
<organism>
    <name type="scientific">Streptococcus pneumoniae (strain CGSP14)</name>
    <dbReference type="NCBI Taxonomy" id="516950"/>
    <lineage>
        <taxon>Bacteria</taxon>
        <taxon>Bacillati</taxon>
        <taxon>Bacillota</taxon>
        <taxon>Bacilli</taxon>
        <taxon>Lactobacillales</taxon>
        <taxon>Streptococcaceae</taxon>
        <taxon>Streptococcus</taxon>
    </lineage>
</organism>
<reference key="1">
    <citation type="journal article" date="2009" name="BMC Genomics">
        <title>Genome evolution driven by host adaptations results in a more virulent and antimicrobial-resistant Streptococcus pneumoniae serotype 14.</title>
        <authorList>
            <person name="Ding F."/>
            <person name="Tang P."/>
            <person name="Hsu M.-H."/>
            <person name="Cui P."/>
            <person name="Hu S."/>
            <person name="Yu J."/>
            <person name="Chiu C.-H."/>
        </authorList>
    </citation>
    <scope>NUCLEOTIDE SEQUENCE [LARGE SCALE GENOMIC DNA]</scope>
    <source>
        <strain>CGSP14</strain>
    </source>
</reference>
<feature type="chain" id="PRO_1000137200" description="Regulatory protein RecX">
    <location>
        <begin position="1"/>
        <end position="258"/>
    </location>
</feature>
<keyword id="KW-0963">Cytoplasm</keyword>
<comment type="function">
    <text evidence="1">Modulates RecA activity.</text>
</comment>
<comment type="subcellular location">
    <subcellularLocation>
        <location evidence="1">Cytoplasm</location>
    </subcellularLocation>
</comment>
<comment type="similarity">
    <text evidence="1">Belongs to the RecX family.</text>
</comment>
<sequence length="258" mass="30167">MKITKLEKKKRLYLMELDGQQTSYITEDTIVRFMLSRDKVISKEELTEIQDFAQFSYGKNLALYHLSFKARTEKEVREYLKKYDIDKNIVSQVIANLKEDKWINDGQYAYAIINTNQLSGDKGPYVLTQKLAQKGISKSTIEENLKEFDFSEVAQRVANKLLKKYEGKLPSRALQDKIIQNLTNKGFSYSDAKIAFDDLDSQVDQETTQELIFKELDKQYSKYARKYEGYELKQRLTQVLARKGYDFSDIASALREYL</sequence>
<protein>
    <recommendedName>
        <fullName evidence="1">Regulatory protein RecX</fullName>
    </recommendedName>
</protein>
<dbReference type="EMBL" id="CP001033">
    <property type="protein sequence ID" value="ACB91129.1"/>
    <property type="molecule type" value="Genomic_DNA"/>
</dbReference>
<dbReference type="RefSeq" id="WP_000705069.1">
    <property type="nucleotide sequence ID" value="NC_010582.1"/>
</dbReference>
<dbReference type="SMR" id="B2ILZ1"/>
<dbReference type="KEGG" id="spw:SPCG_1877"/>
<dbReference type="HOGENOM" id="CLU_066607_4_0_9"/>
<dbReference type="GO" id="GO:0005737">
    <property type="term" value="C:cytoplasm"/>
    <property type="evidence" value="ECO:0007669"/>
    <property type="project" value="UniProtKB-SubCell"/>
</dbReference>
<dbReference type="GO" id="GO:0006282">
    <property type="term" value="P:regulation of DNA repair"/>
    <property type="evidence" value="ECO:0007669"/>
    <property type="project" value="UniProtKB-UniRule"/>
</dbReference>
<dbReference type="Gene3D" id="1.10.10.10">
    <property type="entry name" value="Winged helix-like DNA-binding domain superfamily/Winged helix DNA-binding domain"/>
    <property type="match status" value="4"/>
</dbReference>
<dbReference type="HAMAP" id="MF_01114">
    <property type="entry name" value="RecX"/>
    <property type="match status" value="1"/>
</dbReference>
<dbReference type="InterPro" id="IPR053926">
    <property type="entry name" value="RecX_HTH_1st"/>
</dbReference>
<dbReference type="InterPro" id="IPR053924">
    <property type="entry name" value="RecX_HTH_2nd"/>
</dbReference>
<dbReference type="InterPro" id="IPR053925">
    <property type="entry name" value="RecX_HTH_3rd"/>
</dbReference>
<dbReference type="InterPro" id="IPR003783">
    <property type="entry name" value="Regulatory_RecX"/>
</dbReference>
<dbReference type="InterPro" id="IPR036388">
    <property type="entry name" value="WH-like_DNA-bd_sf"/>
</dbReference>
<dbReference type="NCBIfam" id="NF010733">
    <property type="entry name" value="PRK14135.1"/>
    <property type="match status" value="1"/>
</dbReference>
<dbReference type="PANTHER" id="PTHR33602">
    <property type="entry name" value="REGULATORY PROTEIN RECX FAMILY PROTEIN"/>
    <property type="match status" value="1"/>
</dbReference>
<dbReference type="PANTHER" id="PTHR33602:SF1">
    <property type="entry name" value="REGULATORY PROTEIN RECX FAMILY PROTEIN"/>
    <property type="match status" value="1"/>
</dbReference>
<dbReference type="Pfam" id="PF21982">
    <property type="entry name" value="RecX_HTH1"/>
    <property type="match status" value="1"/>
</dbReference>
<dbReference type="Pfam" id="PF02631">
    <property type="entry name" value="RecX_HTH2"/>
    <property type="match status" value="1"/>
</dbReference>
<dbReference type="Pfam" id="PF21981">
    <property type="entry name" value="RecX_HTH3"/>
    <property type="match status" value="1"/>
</dbReference>